<name>AMT4_ALTAL</name>
<feature type="chain" id="PRO_0000444845" description="Thioesterase AMT4">
    <location>
        <begin position="1"/>
        <end position="261"/>
    </location>
</feature>
<protein>
    <recommendedName>
        <fullName evidence="6">Thioesterase AMT4</fullName>
        <ecNumber evidence="6">3.1.-.-</ecNumber>
    </recommendedName>
    <alternativeName>
        <fullName evidence="4">AM-toxin biosynthesis protein 4</fullName>
    </alternativeName>
</protein>
<organism>
    <name type="scientific">Alternaria alternata</name>
    <name type="common">Alternaria rot fungus</name>
    <name type="synonym">Torula alternata</name>
    <dbReference type="NCBI Taxonomy" id="5599"/>
    <lineage>
        <taxon>Eukaryota</taxon>
        <taxon>Fungi</taxon>
        <taxon>Dikarya</taxon>
        <taxon>Ascomycota</taxon>
        <taxon>Pezizomycotina</taxon>
        <taxon>Dothideomycetes</taxon>
        <taxon>Pleosporomycetidae</taxon>
        <taxon>Pleosporales</taxon>
        <taxon>Pleosporineae</taxon>
        <taxon>Pleosporaceae</taxon>
        <taxon>Alternaria</taxon>
        <taxon>Alternaria sect. Alternaria</taxon>
        <taxon>Alternaria alternata complex</taxon>
    </lineage>
</organism>
<sequence length="261" mass="28752">MSGLDDGLENPVLIQEYSRQGRATAAPAPLVLFHDGGGTLFSYFFLESLGRDVFGFADPRATSGQQWKDGITEMAIHYYKRMKMEIRPGSVILGGWSFGGLLALQLAQMIASDSAGGFEVVGVVLIDTSCPEKASYSSTVANGPIVPFRDDVPDCMQEIVRTSMVRNTEMLSQWEAPTWPQGYSKPPILLLRAAEGIDAKEERSLKLGWELCQHDVIDSVEMVPGNHYSLFESDNIGTLSSRLRESCKRMETPYRKAASSD</sequence>
<keyword id="KW-0378">Hydrolase</keyword>
<keyword id="KW-0843">Virulence</keyword>
<proteinExistence type="evidence at transcript level"/>
<dbReference type="EC" id="3.1.-.-" evidence="6"/>
<dbReference type="EMBL" id="AB525198">
    <property type="protein sequence ID" value="BAF76162.1"/>
    <property type="molecule type" value="Genomic_DNA"/>
</dbReference>
<dbReference type="EMBL" id="AB525199">
    <property type="protein sequence ID" value="BAI44766.1"/>
    <property type="molecule type" value="Genomic_DNA"/>
</dbReference>
<dbReference type="EMBL" id="AB525200">
    <property type="protein sequence ID" value="BAI44808.1"/>
    <property type="molecule type" value="Genomic_DNA"/>
</dbReference>
<dbReference type="SMR" id="A7VMU5"/>
<dbReference type="ESTHER" id="altal-amt4">
    <property type="family name" value="Thioesterase"/>
</dbReference>
<dbReference type="GO" id="GO:0016787">
    <property type="term" value="F:hydrolase activity"/>
    <property type="evidence" value="ECO:0007669"/>
    <property type="project" value="UniProtKB-KW"/>
</dbReference>
<dbReference type="GO" id="GO:0009058">
    <property type="term" value="P:biosynthetic process"/>
    <property type="evidence" value="ECO:0007669"/>
    <property type="project" value="InterPro"/>
</dbReference>
<dbReference type="Gene3D" id="3.40.50.1820">
    <property type="entry name" value="alpha/beta hydrolase"/>
    <property type="match status" value="1"/>
</dbReference>
<dbReference type="InterPro" id="IPR029058">
    <property type="entry name" value="AB_hydrolase_fold"/>
</dbReference>
<dbReference type="InterPro" id="IPR001031">
    <property type="entry name" value="Thioesterase"/>
</dbReference>
<dbReference type="Pfam" id="PF00975">
    <property type="entry name" value="Thioesterase"/>
    <property type="match status" value="1"/>
</dbReference>
<dbReference type="SUPFAM" id="SSF53474">
    <property type="entry name" value="alpha/beta-Hydrolases"/>
    <property type="match status" value="1"/>
</dbReference>
<comment type="function">
    <text evidence="1 2 3 5 7">Thioesterase; part of the gene clusters that mediate the biosynthesis of AM-toxins, host-selective toxins (HSTs) causing Alternaria blotch on apple, a worldwide distributed disease (PubMed:17990954). AM-toxins are cyclic depsipeptides containing the 3 residues 2-hydroxy-isovaleric acid (2-HIV), dehydroalanine, L-alanine which are common for all 3 AM-toxins I to III. The fourth precursor is L-alpha-amino-methoxyphenyl-valeric acid (L-Amv) for AM-toxin I, L-alpha-amino-phenyl-valeric acid (L-Apv) for AM-toxin II, and L-alpha-amino-hydroxyphenyl-valeric acid (L-Ahv) for AM-toxin III (Probable). AM-toxins have two target sites for affecting susceptible apple cells; they cause invagination of the plasma membrane and electrolyte loss and chloroplast disorganization (PubMed:22846083). The non-ribosomal peptide synthetase AMT1 contains 4 catalytic modules and is responsible for activation of each residue in AM-toxin (PubMed:10875335). The aldo-keto reductase AMT2 catalyzes the conversion of 2-keto-isovaleric acid (2-KIV) to 2-hydroxy-isovaleric acid (2-HIV), one of the precursor residues incorporated by AMT1 during AM-toxin biosynthesis, by reduction of its ketone to an alcohol (PubMed:15066029). The cytochrome P450 monooxygenase AMT3 and the thioesterase AMT4 are also important for AM-toxin production, but their exact function within the AM-toxin biosynthesis are not known yet (PubMed:17990954). Up to 21 proteins (including AMT1 to AMT4) are predicted to be involved in AM-toxin biosynthesis since their expression ishighly up-regulated in AM-toxin-producing cultures (PubMed:17990954).</text>
</comment>
<comment type="pathway">
    <text evidence="3">Mycotoxin biosynthesis.</text>
</comment>
<comment type="induction">
    <text evidence="3">Expression is up-regulated more than 10 fold in toxin producing cultures.</text>
</comment>
<comment type="disruption phenotype">
    <text evidence="3">Produces smaller amounts of AM-toxin than the wild type but still causes lesions on apple leaves.</text>
</comment>
<comment type="miscellaneous">
    <text evidence="3">Gene clusters encoding host-selective toxins (HSTs) are localized on conditionally dispensable chromosomes (CDCs), also called supernumerary chromosomes, where they are present in multiple copies (PubMed:17990954). The CDCs are not essential for saprophytic growth but controls host-selective pathogenicity (PubMed:17990954).</text>
</comment>
<comment type="similarity">
    <text evidence="6">Belongs to the AMT4 thioesterase family.</text>
</comment>
<reference key="1">
    <citation type="journal article" date="2004" name="Mol. Microbiol.">
        <title>Dissection of the host range of the fungal plant pathogen Alternaria alternata by modification of secondary metabolism.</title>
        <authorList>
            <person name="Ito K."/>
            <person name="Tanaka T."/>
            <person name="Hatta R."/>
            <person name="Yamamoto M."/>
            <person name="Akimitsu K."/>
            <person name="Tsuge T."/>
        </authorList>
    </citation>
    <scope>NUCLEOTIDE SEQUENCE [GENOMIC DNA]</scope>
    <source>
        <strain>NBRC 8984</strain>
    </source>
</reference>
<reference key="2">
    <citation type="journal article" date="2007" name="Mol. Plant Microbe Interact.">
        <title>Expression profiles of genes encoded by the supernumerary chromosome controlling AM-toxin biosynthesis and pathogenicity in the apple pathotype of Alternaria alternata.</title>
        <authorList>
            <person name="Harimoto Y."/>
            <person name="Hatta R."/>
            <person name="Kodama M."/>
            <person name="Yamamoto M."/>
            <person name="Otani H."/>
            <person name="Tsuge T."/>
        </authorList>
    </citation>
    <scope>NUCLEOTIDE SEQUENCE [GENOMIC DNA]</scope>
    <scope>FUNCTION</scope>
    <scope>DISRUPTION PHENOTYPE</scope>
    <scope>INDUCTION</scope>
    <scope>PATHWAY</scope>
    <source>
        <strain>NBRC 8984</strain>
    </source>
</reference>
<reference key="3">
    <citation type="journal article" date="2000" name="Mol. Plant Microbe Interact.">
        <title>Cloning and characterization of a cyclic peptide synthetase gene from Alternaria alternata apple pathotype whose product is involved in AM-toxin synthesis and pathogenicity.</title>
        <authorList>
            <person name="Johnson R.D."/>
            <person name="Johnson L."/>
            <person name="Itoh Y."/>
            <person name="Kodama M."/>
            <person name="Otani H."/>
            <person name="Kohmoto K."/>
        </authorList>
    </citation>
    <scope>FUNCTION</scope>
    <source>
        <strain>M-71</strain>
    </source>
</reference>
<reference key="4">
    <citation type="journal article" date="2013" name="FEMS Microbiol. Rev.">
        <title>Host-selective toxins produced by the plant pathogenic fungus Alternaria alternata.</title>
        <authorList>
            <person name="Tsuge T."/>
            <person name="Harimoto Y."/>
            <person name="Akimitsu K."/>
            <person name="Ohtani K."/>
            <person name="Kodama M."/>
            <person name="Akagi Y."/>
            <person name="Egusa M."/>
            <person name="Yamamoto M."/>
            <person name="Otani H."/>
        </authorList>
    </citation>
    <scope>REVIEW ON HOST-SELECTIVE TOXINS</scope>
</reference>
<accession>A7VMU5</accession>
<gene>
    <name evidence="4" type="primary">AMT4</name>
</gene>
<evidence type="ECO:0000269" key="1">
    <source>
    </source>
</evidence>
<evidence type="ECO:0000269" key="2">
    <source>
    </source>
</evidence>
<evidence type="ECO:0000269" key="3">
    <source>
    </source>
</evidence>
<evidence type="ECO:0000303" key="4">
    <source>
    </source>
</evidence>
<evidence type="ECO:0000303" key="5">
    <source>
    </source>
</evidence>
<evidence type="ECO:0000305" key="6"/>
<evidence type="ECO:0000305" key="7">
    <source>
    </source>
</evidence>